<keyword id="KW-0024">Alternative initiation</keyword>
<keyword id="KW-1003">Cell membrane</keyword>
<keyword id="KW-0325">Glycoprotein</keyword>
<keyword id="KW-0406">Ion transport</keyword>
<keyword id="KW-0472">Membrane</keyword>
<keyword id="KW-0630">Potassium</keyword>
<keyword id="KW-0633">Potassium transport</keyword>
<keyword id="KW-1185">Reference proteome</keyword>
<keyword id="KW-0812">Transmembrane</keyword>
<keyword id="KW-1133">Transmembrane helix</keyword>
<keyword id="KW-0813">Transport</keyword>
<accession>Q93380</accession>
<accession>Q23024</accession>
<accession>Q23025</accession>
<accession>Q58A93</accession>
<accession>Q7JN54</accession>
<accession>Q7JN55</accession>
<proteinExistence type="evidence at protein level"/>
<organism>
    <name type="scientific">Caenorhabditis elegans</name>
    <dbReference type="NCBI Taxonomy" id="6239"/>
    <lineage>
        <taxon>Eukaryota</taxon>
        <taxon>Metazoa</taxon>
        <taxon>Ecdysozoa</taxon>
        <taxon>Nematoda</taxon>
        <taxon>Chromadorea</taxon>
        <taxon>Rhabditida</taxon>
        <taxon>Rhabditina</taxon>
        <taxon>Rhabditomorpha</taxon>
        <taxon>Rhabditoidea</taxon>
        <taxon>Rhabditidae</taxon>
        <taxon>Peloderinae</taxon>
        <taxon>Caenorhabditis</taxon>
    </lineage>
</organism>
<comment type="function">
    <text evidence="5 6 7">May contribute to coordination of muscle contraction as regulatory subunit of a nonessential potassium channel complex (PubMed:1313436, PubMed:14534247). Plays a role in the formation of muscle connections, also called muscle arm extensions, between the body wall and the motor axons in the dorsal and ventral cord (PubMed:27123983).</text>
</comment>
<comment type="subunit">
    <text evidence="7">May form a complex with sup-9 and sup-10 where unc-93 and sup-10 act as regulatory subunits of the two pore potassium channel sup-9.</text>
</comment>
<comment type="subcellular location">
    <subcellularLocation>
        <location evidence="8">Cell membrane</location>
        <topology evidence="8">Multi-pass membrane protein</topology>
    </subcellularLocation>
    <text evidence="4">Associated with dense bodies.</text>
</comment>
<comment type="alternative products">
    <event type="alternative initiation"/>
    <isoform>
        <id>Q93380-1</id>
        <name>a</name>
        <sequence type="displayed"/>
    </isoform>
    <isoform>
        <id>Q93380-2</id>
        <name>b</name>
        <sequence type="described" ref="VSP_018911"/>
    </isoform>
</comment>
<comment type="tissue specificity">
    <text evidence="4">Low levels in body-wall muscles, eight vulval muscles, intestinal muscles and a subset of head neurons.</text>
</comment>
<comment type="developmental stage">
    <text evidence="3">More highly expressed in L1 larvae than in eggs and adults.</text>
</comment>
<comment type="disruption phenotype">
    <text evidence="5">Defective extension of body wall muscle connections or arms towards the ventral nerve cord. Double knockout with madd-3 results in severe muscle arm extension defects.</text>
</comment>
<comment type="miscellaneous">
    <text evidence="4">Gain of function phenotype is phenocopied by exposure to the unc-49 agonist muscimol.</text>
</comment>
<comment type="similarity">
    <text evidence="8">Belongs to the unc-93 family.</text>
</comment>
<name>UNC93_CAEEL</name>
<reference evidence="8 9" key="1">
    <citation type="journal article" date="1992" name="J. Cell Biol.">
        <title>The Caenorhabditis elegans unc-93 gene encodes a putative transmembrane protein that regulates muscle contraction.</title>
        <authorList>
            <person name="Levin J.Z."/>
            <person name="Horvitz H.R."/>
        </authorList>
    </citation>
    <scope>NUCLEOTIDE SEQUENCE [GENOMIC DNA] (ISOFORMS A AND B)</scope>
    <scope>FUNCTION</scope>
    <scope>DEVELOPMENTAL STAGE</scope>
    <scope>MUTAGENESIS OF ALA-49; GLY-388 AND GLY-562</scope>
    <source>
        <strain evidence="9">Bristol N2</strain>
    </source>
</reference>
<reference evidence="10" key="2">
    <citation type="journal article" date="1998" name="Science">
        <title>Genome sequence of the nematode C. elegans: a platform for investigating biology.</title>
        <authorList>
            <consortium name="The C. elegans sequencing consortium"/>
        </authorList>
    </citation>
    <scope>NUCLEOTIDE SEQUENCE [LARGE SCALE GENOMIC DNA]</scope>
    <source>
        <strain evidence="10">Bristol N2</strain>
    </source>
</reference>
<reference evidence="8" key="3">
    <citation type="journal article" date="2003" name="J. Neurosci.">
        <title>sup-9, sup-10, and unc-93 may encode components of a two-pore K+ channel that coordinates muscle contraction in Caenorhabditis elegans.</title>
        <authorList>
            <person name="de la Cruz I.P."/>
            <person name="Levin J.Z."/>
            <person name="Cummins C."/>
            <person name="Anderson P."/>
            <person name="Horvitz H.R."/>
        </authorList>
    </citation>
    <scope>FUNCTION</scope>
    <scope>SUBCELLULAR LOCATION</scope>
    <scope>TISSUE SPECIFICITY</scope>
</reference>
<reference key="4">
    <citation type="journal article" date="2016" name="PLoS Genet.">
        <title>The MADD-3 LAMMER kinase interacts with a p38 MAP kinase pathway to regulate the display of the EVA-1 guidance receptor in Caenorhabditis elegans.</title>
        <authorList>
            <person name="D'Souza S.A."/>
            <person name="Rajendran L."/>
            <person name="Bagg R."/>
            <person name="Barbier L."/>
            <person name="van Pel D.M."/>
            <person name="Moshiri H."/>
            <person name="Roy P.J."/>
        </authorList>
    </citation>
    <scope>FUNCTION</scope>
    <scope>DISRUPTION PHENOTYPE</scope>
</reference>
<protein>
    <recommendedName>
        <fullName>Putative potassium channel regulatory protein unc-93</fullName>
    </recommendedName>
    <alternativeName>
        <fullName>Uncoordinated protein 93</fullName>
    </alternativeName>
</protein>
<evidence type="ECO:0000255" key="1"/>
<evidence type="ECO:0000256" key="2">
    <source>
        <dbReference type="SAM" id="MobiDB-lite"/>
    </source>
</evidence>
<evidence type="ECO:0000269" key="3">
    <source>
    </source>
</evidence>
<evidence type="ECO:0000269" key="4">
    <source>
    </source>
</evidence>
<evidence type="ECO:0000269" key="5">
    <source>
    </source>
</evidence>
<evidence type="ECO:0000303" key="6">
    <source>
    </source>
</evidence>
<evidence type="ECO:0000303" key="7">
    <source>
    </source>
</evidence>
<evidence type="ECO:0000305" key="8"/>
<evidence type="ECO:0000312" key="9">
    <source>
        <dbReference type="EMBL" id="CAA45760.1"/>
    </source>
</evidence>
<evidence type="ECO:0000312" key="10">
    <source>
        <dbReference type="EMBL" id="CAB03760.3"/>
    </source>
</evidence>
<sequence length="705" mass="80352">MKFQKMGDSNTWDLVGEQQQRKKSRSPSRASRVDSELLVGVENAAELEALGLGKEQLEEEARRHKKQRSKSPALENIRKTSIHLLQKFGAIPKKKDDSVLLFRFHDIPDIPLESLCIRPKEFFEEPKVFSFRDMGREQQKAEVNEKCSYLFRGTSFDHDDHFELPTETGRVPEYDHFCPIHGSRRRLPRNKLVTMQTLMHSVDDEDNEDLAYIYGHDFLAKLVRKKKREMMSGTEKERANKIKRKIMSNLWILSVAFLFLFTAFNGLQNLQTSVNGDLGSDSLVALYLSLAISSLFVPSFMINRLGCKLTFLIAIFVYFLYIVINLRPTYSSMIPASIFCGIAASCIWGAKCAYITEMGIRYASLNFESQTTVIVRFFGYFFMIVHCGQVVGNMVSSYIFTLSYSQALRGPEDSIYDSCGYQFPKNLSDLTELAESNLARPPQKVYVAVCLAYLACVIISGMIMSMFLNALAKDARNRKMAQKFNSEIFYLMLKHLINIKFMLLVPLTIFNGLEQAFLVGVYTKAFVGCGLGIWQIGFVMACFGISDAVCSLVFGPLIKLFGRMPLFVFGAVVNLLMIVTLMVWPLNAADTQIFYVVAAMWGMADGVWNTQINGFWVALVGRQSLQFAFTKYRFWESLGIAIGFALIRHVTVEIYLLITFFMLLLGMCGFLAIENFDHIIKFWHHLIHTSCPEKEPLDDRNSDFE</sequence>
<gene>
    <name type="primary">unc-93</name>
    <name type="ORF">C46F11.1</name>
</gene>
<feature type="chain" id="PRO_0000036083" description="Putative potassium channel regulatory protein unc-93">
    <location>
        <begin position="1"/>
        <end position="705"/>
    </location>
</feature>
<feature type="topological domain" description="Cytoplasmic" evidence="1">
    <location>
        <begin position="1"/>
        <end position="240"/>
    </location>
</feature>
<feature type="transmembrane region" description="Helical" evidence="1">
    <location>
        <begin position="241"/>
        <end position="261"/>
    </location>
</feature>
<feature type="topological domain" description="Extracellular" evidence="1">
    <location>
        <begin position="262"/>
        <end position="276"/>
    </location>
</feature>
<feature type="transmembrane region" description="Helical" evidence="1">
    <location>
        <begin position="277"/>
        <end position="297"/>
    </location>
</feature>
<feature type="topological domain" description="Cytoplasmic" evidence="1">
    <location>
        <begin position="298"/>
        <end position="299"/>
    </location>
</feature>
<feature type="transmembrane region" description="Helical" evidence="1">
    <location>
        <begin position="300"/>
        <end position="320"/>
    </location>
</feature>
<feature type="topological domain" description="Extracellular" evidence="1">
    <location>
        <begin position="321"/>
        <end position="324"/>
    </location>
</feature>
<feature type="transmembrane region" description="Helical" evidence="1">
    <location>
        <begin position="325"/>
        <end position="345"/>
    </location>
</feature>
<feature type="topological domain" description="Cytoplasmic" evidence="1">
    <location>
        <begin position="346"/>
        <end position="366"/>
    </location>
</feature>
<feature type="transmembrane region" description="Helical" evidence="1">
    <location>
        <begin position="367"/>
        <end position="387"/>
    </location>
</feature>
<feature type="topological domain" description="Extracellular" evidence="1">
    <location>
        <begin position="388"/>
        <end position="441"/>
    </location>
</feature>
<feature type="transmembrane region" description="Helical" evidence="1">
    <location>
        <begin position="442"/>
        <end position="462"/>
    </location>
</feature>
<feature type="topological domain" description="Cytoplasmic" evidence="1">
    <location>
        <begin position="463"/>
        <end position="495"/>
    </location>
</feature>
<feature type="transmembrane region" description="Helical" evidence="1">
    <location>
        <begin position="496"/>
        <end position="516"/>
    </location>
</feature>
<feature type="topological domain" description="Extracellular" evidence="1">
    <location>
        <begin position="517"/>
        <end position="519"/>
    </location>
</feature>
<feature type="transmembrane region" description="Helical" evidence="1">
    <location>
        <begin position="520"/>
        <end position="540"/>
    </location>
</feature>
<feature type="topological domain" description="Cytoplasmic" evidence="1">
    <location>
        <begin position="541"/>
        <end position="560"/>
    </location>
</feature>
<feature type="transmembrane region" description="Helical" evidence="1">
    <location>
        <begin position="561"/>
        <end position="581"/>
    </location>
</feature>
<feature type="topological domain" description="Extracellular" evidence="1">
    <location>
        <position position="582"/>
    </location>
</feature>
<feature type="transmembrane region" description="Helical" evidence="1">
    <location>
        <begin position="583"/>
        <end position="603"/>
    </location>
</feature>
<feature type="topological domain" description="Cytoplasmic" evidence="1">
    <location>
        <begin position="604"/>
        <end position="621"/>
    </location>
</feature>
<feature type="transmembrane region" description="Helical" evidence="1">
    <location>
        <begin position="622"/>
        <end position="642"/>
    </location>
</feature>
<feature type="topological domain" description="Extracellular" evidence="1">
    <location>
        <begin position="643"/>
        <end position="647"/>
    </location>
</feature>
<feature type="transmembrane region" description="Helical" evidence="1">
    <location>
        <begin position="648"/>
        <end position="668"/>
    </location>
</feature>
<feature type="topological domain" description="Cytoplasmic" evidence="1">
    <location>
        <begin position="669"/>
        <end position="700"/>
    </location>
</feature>
<feature type="region of interest" description="Disordered" evidence="2">
    <location>
        <begin position="1"/>
        <end position="34"/>
    </location>
</feature>
<feature type="glycosylation site" description="N-linked (GlcNAc...) asparagine" evidence="1">
    <location>
        <position position="426"/>
    </location>
</feature>
<feature type="splice variant" id="VSP_018911" description="In isoform b." evidence="8">
    <location>
        <begin position="1"/>
        <end position="5"/>
    </location>
</feature>
<feature type="mutagenesis site" description="In n200; confers 'rubber band' muscle contraction; when associated with V-562." evidence="3">
    <original>A</original>
    <variation>V</variation>
    <location>
        <position position="49"/>
    </location>
</feature>
<feature type="mutagenesis site" description="In e1500; confers 'rubber band' muscle contraction." evidence="3">
    <original>G</original>
    <variation>A</variation>
    <location>
        <position position="388"/>
    </location>
</feature>
<feature type="mutagenesis site" description="In n200; confers 'rubber band' muscle contraction; when associated with V-49." evidence="3">
    <original>G</original>
    <variation>V</variation>
    <location>
        <position position="562"/>
    </location>
</feature>
<dbReference type="EMBL" id="X64415">
    <property type="protein sequence ID" value="CAA45760.1"/>
    <property type="molecule type" value="Genomic_DNA"/>
</dbReference>
<dbReference type="EMBL" id="X64415">
    <property type="protein sequence ID" value="CAA45761.1"/>
    <property type="molecule type" value="Genomic_DNA"/>
</dbReference>
<dbReference type="EMBL" id="Z81449">
    <property type="protein sequence ID" value="CAB03760.3"/>
    <property type="molecule type" value="Genomic_DNA"/>
</dbReference>
<dbReference type="EMBL" id="Z81449">
    <property type="protein sequence ID" value="CAI70399.1"/>
    <property type="molecule type" value="Genomic_DNA"/>
</dbReference>
<dbReference type="PIR" id="S23352">
    <property type="entry name" value="S23352"/>
</dbReference>
<dbReference type="PIR" id="T19969">
    <property type="entry name" value="T19969"/>
</dbReference>
<dbReference type="RefSeq" id="NP_001021218.1">
    <molecule id="Q93380-1"/>
    <property type="nucleotide sequence ID" value="NM_001026047.5"/>
</dbReference>
<dbReference type="RefSeq" id="NP_001021219.1">
    <property type="nucleotide sequence ID" value="NM_001026048.2"/>
</dbReference>
<dbReference type="RefSeq" id="NP_001366876.1">
    <molecule id="Q93380-2"/>
    <property type="nucleotide sequence ID" value="NM_001381807.1"/>
</dbReference>
<dbReference type="SMR" id="Q93380"/>
<dbReference type="BioGRID" id="40706">
    <property type="interactions" value="2"/>
</dbReference>
<dbReference type="DIP" id="DIP-24405N"/>
<dbReference type="FunCoup" id="Q93380">
    <property type="interactions" value="26"/>
</dbReference>
<dbReference type="IntAct" id="Q93380">
    <property type="interactions" value="1"/>
</dbReference>
<dbReference type="STRING" id="6239.C46F11.1a.1"/>
<dbReference type="TCDB" id="2.A.1.58.2">
    <property type="family name" value="the major facilitator superfamily (mfs)"/>
</dbReference>
<dbReference type="GlyCosmos" id="Q93380">
    <property type="glycosylation" value="1 site, No reported glycans"/>
</dbReference>
<dbReference type="iPTMnet" id="Q93380"/>
<dbReference type="PaxDb" id="6239-C46F11.1a"/>
<dbReference type="EnsemblMetazoa" id="C46F11.1a.1">
    <molecule id="Q93380-1"/>
    <property type="protein sequence ID" value="C46F11.1a.1"/>
    <property type="gene ID" value="WBGene00006822"/>
</dbReference>
<dbReference type="EnsemblMetazoa" id="C46F11.1b.1">
    <molecule id="Q93380-2"/>
    <property type="protein sequence ID" value="C46F11.1b.1"/>
    <property type="gene ID" value="WBGene00006822"/>
</dbReference>
<dbReference type="GeneID" id="175466"/>
<dbReference type="KEGG" id="cel:CELE_C46F11.1"/>
<dbReference type="UCSC" id="C46F11.1a">
    <molecule id="Q93380-1"/>
    <property type="organism name" value="c. elegans"/>
</dbReference>
<dbReference type="AGR" id="WB:WBGene00006822"/>
<dbReference type="CTD" id="175466"/>
<dbReference type="WormBase" id="C46F11.1a">
    <molecule id="Q93380-1"/>
    <property type="protein sequence ID" value="CE30906"/>
    <property type="gene ID" value="WBGene00006822"/>
    <property type="gene designation" value="unc-93"/>
</dbReference>
<dbReference type="WormBase" id="C46F11.1b">
    <molecule id="Q93380-2"/>
    <property type="protein sequence ID" value="CE37957"/>
    <property type="gene ID" value="WBGene00006822"/>
    <property type="gene designation" value="unc-93"/>
</dbReference>
<dbReference type="eggNOG" id="KOG3097">
    <property type="taxonomic scope" value="Eukaryota"/>
</dbReference>
<dbReference type="GeneTree" id="ENSGT00530000063359"/>
<dbReference type="InParanoid" id="Q93380"/>
<dbReference type="OMA" id="CCTIVAL"/>
<dbReference type="OrthoDB" id="47330at2759"/>
<dbReference type="PhylomeDB" id="Q93380"/>
<dbReference type="PRO" id="PR:Q93380"/>
<dbReference type="Proteomes" id="UP000001940">
    <property type="component" value="Chromosome III"/>
</dbReference>
<dbReference type="Bgee" id="WBGene00006822">
    <property type="expression patterns" value="Expressed in material anatomical entity and 4 other cell types or tissues"/>
</dbReference>
<dbReference type="GO" id="GO:0005886">
    <property type="term" value="C:plasma membrane"/>
    <property type="evidence" value="ECO:0000314"/>
    <property type="project" value="WormBase"/>
</dbReference>
<dbReference type="GO" id="GO:0055120">
    <property type="term" value="C:striated muscle dense body"/>
    <property type="evidence" value="ECO:0000314"/>
    <property type="project" value="WormBase"/>
</dbReference>
<dbReference type="GO" id="GO:0015459">
    <property type="term" value="F:potassium channel regulator activity"/>
    <property type="evidence" value="ECO:0000316"/>
    <property type="project" value="UniProtKB"/>
</dbReference>
<dbReference type="GO" id="GO:0006813">
    <property type="term" value="P:potassium ion transport"/>
    <property type="evidence" value="ECO:0007669"/>
    <property type="project" value="UniProtKB-KW"/>
</dbReference>
<dbReference type="GO" id="GO:0006937">
    <property type="term" value="P:regulation of muscle contraction"/>
    <property type="evidence" value="ECO:0000315"/>
    <property type="project" value="UniProtKB"/>
</dbReference>
<dbReference type="GO" id="GO:0043266">
    <property type="term" value="P:regulation of potassium ion transport"/>
    <property type="evidence" value="ECO:0000316"/>
    <property type="project" value="UniProtKB"/>
</dbReference>
<dbReference type="CDD" id="cd17406">
    <property type="entry name" value="MFS_unc93A_like"/>
    <property type="match status" value="1"/>
</dbReference>
<dbReference type="FunFam" id="1.20.1250.20:FF:000539">
    <property type="entry name" value="Protein unc-93 homolog A"/>
    <property type="match status" value="1"/>
</dbReference>
<dbReference type="FunFam" id="1.20.1250.20:FF:000290">
    <property type="entry name" value="Unc-93 homolog A"/>
    <property type="match status" value="1"/>
</dbReference>
<dbReference type="Gene3D" id="1.20.1250.20">
    <property type="entry name" value="MFS general substrate transporter like domains"/>
    <property type="match status" value="2"/>
</dbReference>
<dbReference type="InterPro" id="IPR010291">
    <property type="entry name" value="Ion_channel_UNC-93"/>
</dbReference>
<dbReference type="InterPro" id="IPR036259">
    <property type="entry name" value="MFS_trans_sf"/>
</dbReference>
<dbReference type="InterPro" id="IPR051951">
    <property type="entry name" value="UNC-93_regulatory"/>
</dbReference>
<dbReference type="PANTHER" id="PTHR19444:SF13">
    <property type="entry name" value="PROTEIN UNC-93 HOMOLOG A"/>
    <property type="match status" value="1"/>
</dbReference>
<dbReference type="PANTHER" id="PTHR19444">
    <property type="entry name" value="UNC-93 RELATED"/>
    <property type="match status" value="1"/>
</dbReference>
<dbReference type="Pfam" id="PF05978">
    <property type="entry name" value="UNC-93"/>
    <property type="match status" value="1"/>
</dbReference>
<dbReference type="SUPFAM" id="SSF103473">
    <property type="entry name" value="MFS general substrate transporter"/>
    <property type="match status" value="1"/>
</dbReference>